<sequence length="107" mass="11589">MSISISDSAAQRVSAFLNHRGKGLGLRLGVRTSGCSGMAYVLEFVDEINDDDIVFEDKGVKVIIDGKSMVYLDGTELDFVKEGLNEGFKFNNPNVSNECGCGESFNV</sequence>
<name>ISCA_YERPE</name>
<gene>
    <name evidence="1" type="primary">iscA</name>
    <name type="ordered locus">YPO2894</name>
    <name type="ordered locus">y1336</name>
    <name type="ordered locus">YP_2560</name>
</gene>
<evidence type="ECO:0000255" key="1">
    <source>
        <dbReference type="HAMAP-Rule" id="MF_01429"/>
    </source>
</evidence>
<reference key="1">
    <citation type="journal article" date="2001" name="Nature">
        <title>Genome sequence of Yersinia pestis, the causative agent of plague.</title>
        <authorList>
            <person name="Parkhill J."/>
            <person name="Wren B.W."/>
            <person name="Thomson N.R."/>
            <person name="Titball R.W."/>
            <person name="Holden M.T.G."/>
            <person name="Prentice M.B."/>
            <person name="Sebaihia M."/>
            <person name="James K.D."/>
            <person name="Churcher C.M."/>
            <person name="Mungall K.L."/>
            <person name="Baker S."/>
            <person name="Basham D."/>
            <person name="Bentley S.D."/>
            <person name="Brooks K."/>
            <person name="Cerdeno-Tarraga A.-M."/>
            <person name="Chillingworth T."/>
            <person name="Cronin A."/>
            <person name="Davies R.M."/>
            <person name="Davis P."/>
            <person name="Dougan G."/>
            <person name="Feltwell T."/>
            <person name="Hamlin N."/>
            <person name="Holroyd S."/>
            <person name="Jagels K."/>
            <person name="Karlyshev A.V."/>
            <person name="Leather S."/>
            <person name="Moule S."/>
            <person name="Oyston P.C.F."/>
            <person name="Quail M.A."/>
            <person name="Rutherford K.M."/>
            <person name="Simmonds M."/>
            <person name="Skelton J."/>
            <person name="Stevens K."/>
            <person name="Whitehead S."/>
            <person name="Barrell B.G."/>
        </authorList>
    </citation>
    <scope>NUCLEOTIDE SEQUENCE [LARGE SCALE GENOMIC DNA]</scope>
    <source>
        <strain>CO-92 / Biovar Orientalis</strain>
    </source>
</reference>
<reference key="2">
    <citation type="journal article" date="2002" name="J. Bacteriol.">
        <title>Genome sequence of Yersinia pestis KIM.</title>
        <authorList>
            <person name="Deng W."/>
            <person name="Burland V."/>
            <person name="Plunkett G. III"/>
            <person name="Boutin A."/>
            <person name="Mayhew G.F."/>
            <person name="Liss P."/>
            <person name="Perna N.T."/>
            <person name="Rose D.J."/>
            <person name="Mau B."/>
            <person name="Zhou S."/>
            <person name="Schwartz D.C."/>
            <person name="Fetherston J.D."/>
            <person name="Lindler L.E."/>
            <person name="Brubaker R.R."/>
            <person name="Plano G.V."/>
            <person name="Straley S.C."/>
            <person name="McDonough K.A."/>
            <person name="Nilles M.L."/>
            <person name="Matson J.S."/>
            <person name="Blattner F.R."/>
            <person name="Perry R.D."/>
        </authorList>
    </citation>
    <scope>NUCLEOTIDE SEQUENCE [LARGE SCALE GENOMIC DNA]</scope>
    <source>
        <strain>KIM10+ / Biovar Mediaevalis</strain>
    </source>
</reference>
<reference key="3">
    <citation type="journal article" date="2004" name="DNA Res.">
        <title>Complete genome sequence of Yersinia pestis strain 91001, an isolate avirulent to humans.</title>
        <authorList>
            <person name="Song Y."/>
            <person name="Tong Z."/>
            <person name="Wang J."/>
            <person name="Wang L."/>
            <person name="Guo Z."/>
            <person name="Han Y."/>
            <person name="Zhang J."/>
            <person name="Pei D."/>
            <person name="Zhou D."/>
            <person name="Qin H."/>
            <person name="Pang X."/>
            <person name="Han Y."/>
            <person name="Zhai J."/>
            <person name="Li M."/>
            <person name="Cui B."/>
            <person name="Qi Z."/>
            <person name="Jin L."/>
            <person name="Dai R."/>
            <person name="Chen F."/>
            <person name="Li S."/>
            <person name="Ye C."/>
            <person name="Du Z."/>
            <person name="Lin W."/>
            <person name="Wang J."/>
            <person name="Yu J."/>
            <person name="Yang H."/>
            <person name="Wang J."/>
            <person name="Huang P."/>
            <person name="Yang R."/>
        </authorList>
    </citation>
    <scope>NUCLEOTIDE SEQUENCE [LARGE SCALE GENOMIC DNA]</scope>
    <source>
        <strain>91001 / Biovar Mediaevalis</strain>
    </source>
</reference>
<keyword id="KW-0408">Iron</keyword>
<keyword id="KW-0479">Metal-binding</keyword>
<keyword id="KW-1185">Reference proteome</keyword>
<accession>Q8ZCS3</accession>
<accession>Q0WD10</accession>
<accession>Q74SN4</accession>
<accession>Q7CJN5</accession>
<feature type="chain" id="PRO_0000077007" description="Iron-binding protein IscA">
    <location>
        <begin position="1"/>
        <end position="107"/>
    </location>
</feature>
<feature type="binding site" evidence="1">
    <location>
        <position position="35"/>
    </location>
    <ligand>
        <name>Fe cation</name>
        <dbReference type="ChEBI" id="CHEBI:24875"/>
    </ligand>
</feature>
<feature type="binding site" evidence="1">
    <location>
        <position position="99"/>
    </location>
    <ligand>
        <name>Fe cation</name>
        <dbReference type="ChEBI" id="CHEBI:24875"/>
    </ligand>
</feature>
<feature type="binding site" evidence="1">
    <location>
        <position position="101"/>
    </location>
    <ligand>
        <name>Fe cation</name>
        <dbReference type="ChEBI" id="CHEBI:24875"/>
    </ligand>
</feature>
<proteinExistence type="inferred from homology"/>
<protein>
    <recommendedName>
        <fullName evidence="1">Iron-binding protein IscA</fullName>
    </recommendedName>
    <alternativeName>
        <fullName evidence="1">Iron-sulfur cluster assembly protein</fullName>
    </alternativeName>
</protein>
<dbReference type="EMBL" id="AL590842">
    <property type="protein sequence ID" value="CAL21505.1"/>
    <property type="molecule type" value="Genomic_DNA"/>
</dbReference>
<dbReference type="EMBL" id="AE009952">
    <property type="protein sequence ID" value="AAM84909.1"/>
    <property type="molecule type" value="Genomic_DNA"/>
</dbReference>
<dbReference type="EMBL" id="AE017042">
    <property type="protein sequence ID" value="AAS62756.1"/>
    <property type="molecule type" value="Genomic_DNA"/>
</dbReference>
<dbReference type="PIR" id="AF0352">
    <property type="entry name" value="AF0352"/>
</dbReference>
<dbReference type="RefSeq" id="WP_002209834.1">
    <property type="nucleotide sequence ID" value="NZ_WUCM01000090.1"/>
</dbReference>
<dbReference type="RefSeq" id="YP_002347828.1">
    <property type="nucleotide sequence ID" value="NC_003143.1"/>
</dbReference>
<dbReference type="SMR" id="Q8ZCS3"/>
<dbReference type="STRING" id="214092.YPO2894"/>
<dbReference type="PaxDb" id="214092-YPO2894"/>
<dbReference type="DNASU" id="1146283"/>
<dbReference type="EnsemblBacteria" id="AAS62756">
    <property type="protein sequence ID" value="AAS62756"/>
    <property type="gene ID" value="YP_2560"/>
</dbReference>
<dbReference type="GeneID" id="96662216"/>
<dbReference type="KEGG" id="ype:YPO2894"/>
<dbReference type="KEGG" id="ypk:y1336"/>
<dbReference type="KEGG" id="ypm:YP_2560"/>
<dbReference type="PATRIC" id="fig|214092.21.peg.3344"/>
<dbReference type="eggNOG" id="COG0316">
    <property type="taxonomic scope" value="Bacteria"/>
</dbReference>
<dbReference type="HOGENOM" id="CLU_069054_5_1_6"/>
<dbReference type="OMA" id="GCAGQEY"/>
<dbReference type="OrthoDB" id="9801228at2"/>
<dbReference type="Proteomes" id="UP000000815">
    <property type="component" value="Chromosome"/>
</dbReference>
<dbReference type="Proteomes" id="UP000001019">
    <property type="component" value="Chromosome"/>
</dbReference>
<dbReference type="Proteomes" id="UP000002490">
    <property type="component" value="Chromosome"/>
</dbReference>
<dbReference type="GO" id="GO:0005737">
    <property type="term" value="C:cytoplasm"/>
    <property type="evidence" value="ECO:0000318"/>
    <property type="project" value="GO_Central"/>
</dbReference>
<dbReference type="GO" id="GO:0005829">
    <property type="term" value="C:cytosol"/>
    <property type="evidence" value="ECO:0000318"/>
    <property type="project" value="GO_Central"/>
</dbReference>
<dbReference type="GO" id="GO:0051537">
    <property type="term" value="F:2 iron, 2 sulfur cluster binding"/>
    <property type="evidence" value="ECO:0000318"/>
    <property type="project" value="GO_Central"/>
</dbReference>
<dbReference type="GO" id="GO:0005506">
    <property type="term" value="F:iron ion binding"/>
    <property type="evidence" value="ECO:0007669"/>
    <property type="project" value="UniProtKB-UniRule"/>
</dbReference>
<dbReference type="GO" id="GO:0016226">
    <property type="term" value="P:iron-sulfur cluster assembly"/>
    <property type="evidence" value="ECO:0000318"/>
    <property type="project" value="GO_Central"/>
</dbReference>
<dbReference type="FunFam" id="2.60.300.12:FF:000001">
    <property type="entry name" value="Iron-binding protein IscA"/>
    <property type="match status" value="1"/>
</dbReference>
<dbReference type="Gene3D" id="2.60.300.12">
    <property type="entry name" value="HesB-like domain"/>
    <property type="match status" value="1"/>
</dbReference>
<dbReference type="HAMAP" id="MF_01429">
    <property type="entry name" value="Fe_S_insert_IscA"/>
    <property type="match status" value="1"/>
</dbReference>
<dbReference type="InterPro" id="IPR050322">
    <property type="entry name" value="Fe-S_cluster_asmbl/transfer"/>
</dbReference>
<dbReference type="InterPro" id="IPR000361">
    <property type="entry name" value="FeS_biogenesis"/>
</dbReference>
<dbReference type="InterPro" id="IPR016092">
    <property type="entry name" value="FeS_cluster_insertion"/>
</dbReference>
<dbReference type="InterPro" id="IPR017870">
    <property type="entry name" value="FeS_cluster_insertion_CS"/>
</dbReference>
<dbReference type="InterPro" id="IPR035903">
    <property type="entry name" value="HesB-like_dom_sf"/>
</dbReference>
<dbReference type="InterPro" id="IPR011302">
    <property type="entry name" value="IscA_proteobacteria"/>
</dbReference>
<dbReference type="NCBIfam" id="TIGR00049">
    <property type="entry name" value="iron-sulfur cluster assembly accessory protein"/>
    <property type="match status" value="1"/>
</dbReference>
<dbReference type="NCBIfam" id="TIGR02011">
    <property type="entry name" value="IscA"/>
    <property type="match status" value="1"/>
</dbReference>
<dbReference type="NCBIfam" id="NF007049">
    <property type="entry name" value="PRK09502.1"/>
    <property type="match status" value="1"/>
</dbReference>
<dbReference type="PANTHER" id="PTHR10072:SF41">
    <property type="entry name" value="IRON-SULFUR CLUSTER ASSEMBLY 1 HOMOLOG, MITOCHONDRIAL"/>
    <property type="match status" value="1"/>
</dbReference>
<dbReference type="PANTHER" id="PTHR10072">
    <property type="entry name" value="IRON-SULFUR CLUSTER ASSEMBLY PROTEIN"/>
    <property type="match status" value="1"/>
</dbReference>
<dbReference type="Pfam" id="PF01521">
    <property type="entry name" value="Fe-S_biosyn"/>
    <property type="match status" value="1"/>
</dbReference>
<dbReference type="SUPFAM" id="SSF89360">
    <property type="entry name" value="HesB-like domain"/>
    <property type="match status" value="1"/>
</dbReference>
<dbReference type="PROSITE" id="PS01152">
    <property type="entry name" value="HESB"/>
    <property type="match status" value="1"/>
</dbReference>
<organism>
    <name type="scientific">Yersinia pestis</name>
    <dbReference type="NCBI Taxonomy" id="632"/>
    <lineage>
        <taxon>Bacteria</taxon>
        <taxon>Pseudomonadati</taxon>
        <taxon>Pseudomonadota</taxon>
        <taxon>Gammaproteobacteria</taxon>
        <taxon>Enterobacterales</taxon>
        <taxon>Yersiniaceae</taxon>
        <taxon>Yersinia</taxon>
    </lineage>
</organism>
<comment type="function">
    <text evidence="1">Is able to transfer iron-sulfur clusters to apo-ferredoxin. Multiple cycles of [2Fe2S] cluster formation and transfer are observed, suggesting that IscA acts catalytically. Recruits intracellular free iron so as to provide iron for the assembly of transient iron-sulfur cluster in IscU in the presence of IscS, L-cysteine and the thioredoxin reductase system TrxA/TrxB.</text>
</comment>
<comment type="cofactor">
    <cofactor evidence="1">
        <name>Fe cation</name>
        <dbReference type="ChEBI" id="CHEBI:24875"/>
    </cofactor>
    <text evidence="1">Binds 2 iron ions per dimer. The dimer may bind additional iron ions.</text>
</comment>
<comment type="subunit">
    <text evidence="1">Homodimer; may form tetramers and higher multimers.</text>
</comment>
<comment type="similarity">
    <text evidence="1">Belongs to the HesB/IscA family.</text>
</comment>